<keyword id="KW-0004">4Fe-4S</keyword>
<keyword id="KW-0963">Cytoplasm</keyword>
<keyword id="KW-1015">Disulfide bond</keyword>
<keyword id="KW-0408">Iron</keyword>
<keyword id="KW-0411">Iron-sulfur</keyword>
<keyword id="KW-0479">Metal-binding</keyword>
<keyword id="KW-0489">Methyltransferase</keyword>
<keyword id="KW-0698">rRNA processing</keyword>
<keyword id="KW-0949">S-adenosyl-L-methionine</keyword>
<keyword id="KW-0808">Transferase</keyword>
<keyword id="KW-0819">tRNA processing</keyword>
<name>RLMN_BURP6</name>
<proteinExistence type="inferred from homology"/>
<comment type="function">
    <text evidence="1">Specifically methylates position 2 of adenine 2503 in 23S rRNA and position 2 of adenine 37 in tRNAs. m2A2503 modification seems to play a crucial role in the proofreading step occurring at the peptidyl transferase center and thus would serve to optimize ribosomal fidelity.</text>
</comment>
<comment type="catalytic activity">
    <reaction evidence="1">
        <text>adenosine(2503) in 23S rRNA + 2 reduced [2Fe-2S]-[ferredoxin] + 2 S-adenosyl-L-methionine = 2-methyladenosine(2503) in 23S rRNA + 5'-deoxyadenosine + L-methionine + 2 oxidized [2Fe-2S]-[ferredoxin] + S-adenosyl-L-homocysteine</text>
        <dbReference type="Rhea" id="RHEA:42916"/>
        <dbReference type="Rhea" id="RHEA-COMP:10000"/>
        <dbReference type="Rhea" id="RHEA-COMP:10001"/>
        <dbReference type="Rhea" id="RHEA-COMP:10152"/>
        <dbReference type="Rhea" id="RHEA-COMP:10282"/>
        <dbReference type="ChEBI" id="CHEBI:17319"/>
        <dbReference type="ChEBI" id="CHEBI:33737"/>
        <dbReference type="ChEBI" id="CHEBI:33738"/>
        <dbReference type="ChEBI" id="CHEBI:57844"/>
        <dbReference type="ChEBI" id="CHEBI:57856"/>
        <dbReference type="ChEBI" id="CHEBI:59789"/>
        <dbReference type="ChEBI" id="CHEBI:74411"/>
        <dbReference type="ChEBI" id="CHEBI:74497"/>
        <dbReference type="EC" id="2.1.1.192"/>
    </reaction>
</comment>
<comment type="catalytic activity">
    <reaction evidence="1">
        <text>adenosine(37) in tRNA + 2 reduced [2Fe-2S]-[ferredoxin] + 2 S-adenosyl-L-methionine = 2-methyladenosine(37) in tRNA + 5'-deoxyadenosine + L-methionine + 2 oxidized [2Fe-2S]-[ferredoxin] + S-adenosyl-L-homocysteine</text>
        <dbReference type="Rhea" id="RHEA:43332"/>
        <dbReference type="Rhea" id="RHEA-COMP:10000"/>
        <dbReference type="Rhea" id="RHEA-COMP:10001"/>
        <dbReference type="Rhea" id="RHEA-COMP:10162"/>
        <dbReference type="Rhea" id="RHEA-COMP:10485"/>
        <dbReference type="ChEBI" id="CHEBI:17319"/>
        <dbReference type="ChEBI" id="CHEBI:33737"/>
        <dbReference type="ChEBI" id="CHEBI:33738"/>
        <dbReference type="ChEBI" id="CHEBI:57844"/>
        <dbReference type="ChEBI" id="CHEBI:57856"/>
        <dbReference type="ChEBI" id="CHEBI:59789"/>
        <dbReference type="ChEBI" id="CHEBI:74411"/>
        <dbReference type="ChEBI" id="CHEBI:74497"/>
        <dbReference type="EC" id="2.1.1.192"/>
    </reaction>
</comment>
<comment type="cofactor">
    <cofactor evidence="1">
        <name>[4Fe-4S] cluster</name>
        <dbReference type="ChEBI" id="CHEBI:49883"/>
    </cofactor>
    <text evidence="1">Binds 1 [4Fe-4S] cluster. The cluster is coordinated with 3 cysteines and an exchangeable S-adenosyl-L-methionine.</text>
</comment>
<comment type="subcellular location">
    <subcellularLocation>
        <location evidence="1">Cytoplasm</location>
    </subcellularLocation>
</comment>
<comment type="miscellaneous">
    <text evidence="1">Reaction proceeds by a ping-pong mechanism involving intermediate methylation of a conserved cysteine residue.</text>
</comment>
<comment type="similarity">
    <text evidence="1">Belongs to the radical SAM superfamily. RlmN family.</text>
</comment>
<organism>
    <name type="scientific">Burkholderia pseudomallei (strain 668)</name>
    <dbReference type="NCBI Taxonomy" id="320373"/>
    <lineage>
        <taxon>Bacteria</taxon>
        <taxon>Pseudomonadati</taxon>
        <taxon>Pseudomonadota</taxon>
        <taxon>Betaproteobacteria</taxon>
        <taxon>Burkholderiales</taxon>
        <taxon>Burkholderiaceae</taxon>
        <taxon>Burkholderia</taxon>
        <taxon>pseudomallei group</taxon>
    </lineage>
</organism>
<dbReference type="EC" id="2.1.1.192" evidence="1"/>
<dbReference type="EMBL" id="CP000570">
    <property type="protein sequence ID" value="ABN83812.1"/>
    <property type="molecule type" value="Genomic_DNA"/>
</dbReference>
<dbReference type="RefSeq" id="WP_004192451.1">
    <property type="nucleotide sequence ID" value="NC_009074.1"/>
</dbReference>
<dbReference type="SMR" id="A3NA56"/>
<dbReference type="GeneID" id="93060478"/>
<dbReference type="KEGG" id="bpd:BURPS668_2192"/>
<dbReference type="HOGENOM" id="CLU_029101_0_0_4"/>
<dbReference type="GO" id="GO:0005737">
    <property type="term" value="C:cytoplasm"/>
    <property type="evidence" value="ECO:0007669"/>
    <property type="project" value="UniProtKB-SubCell"/>
</dbReference>
<dbReference type="GO" id="GO:0051539">
    <property type="term" value="F:4 iron, 4 sulfur cluster binding"/>
    <property type="evidence" value="ECO:0007669"/>
    <property type="project" value="UniProtKB-UniRule"/>
</dbReference>
<dbReference type="GO" id="GO:0046872">
    <property type="term" value="F:metal ion binding"/>
    <property type="evidence" value="ECO:0007669"/>
    <property type="project" value="UniProtKB-KW"/>
</dbReference>
<dbReference type="GO" id="GO:0070040">
    <property type="term" value="F:rRNA (adenine(2503)-C2-)-methyltransferase activity"/>
    <property type="evidence" value="ECO:0007669"/>
    <property type="project" value="UniProtKB-UniRule"/>
</dbReference>
<dbReference type="GO" id="GO:0019843">
    <property type="term" value="F:rRNA binding"/>
    <property type="evidence" value="ECO:0007669"/>
    <property type="project" value="UniProtKB-UniRule"/>
</dbReference>
<dbReference type="GO" id="GO:0002935">
    <property type="term" value="F:tRNA (adenine(37)-C2)-methyltransferase activity"/>
    <property type="evidence" value="ECO:0007669"/>
    <property type="project" value="UniProtKB-UniRule"/>
</dbReference>
<dbReference type="GO" id="GO:0000049">
    <property type="term" value="F:tRNA binding"/>
    <property type="evidence" value="ECO:0007669"/>
    <property type="project" value="UniProtKB-UniRule"/>
</dbReference>
<dbReference type="GO" id="GO:0070475">
    <property type="term" value="P:rRNA base methylation"/>
    <property type="evidence" value="ECO:0007669"/>
    <property type="project" value="UniProtKB-UniRule"/>
</dbReference>
<dbReference type="GO" id="GO:0030488">
    <property type="term" value="P:tRNA methylation"/>
    <property type="evidence" value="ECO:0007669"/>
    <property type="project" value="UniProtKB-UniRule"/>
</dbReference>
<dbReference type="CDD" id="cd01335">
    <property type="entry name" value="Radical_SAM"/>
    <property type="match status" value="1"/>
</dbReference>
<dbReference type="FunFam" id="1.10.150.530:FF:000003">
    <property type="entry name" value="Dual-specificity RNA methyltransferase RlmN"/>
    <property type="match status" value="1"/>
</dbReference>
<dbReference type="FunFam" id="3.20.20.70:FF:000008">
    <property type="entry name" value="Dual-specificity RNA methyltransferase RlmN"/>
    <property type="match status" value="1"/>
</dbReference>
<dbReference type="Gene3D" id="1.10.150.530">
    <property type="match status" value="1"/>
</dbReference>
<dbReference type="Gene3D" id="3.20.20.70">
    <property type="entry name" value="Aldolase class I"/>
    <property type="match status" value="1"/>
</dbReference>
<dbReference type="HAMAP" id="MF_01849">
    <property type="entry name" value="RNA_methyltr_RlmN"/>
    <property type="match status" value="1"/>
</dbReference>
<dbReference type="InterPro" id="IPR013785">
    <property type="entry name" value="Aldolase_TIM"/>
</dbReference>
<dbReference type="InterPro" id="IPR040072">
    <property type="entry name" value="Methyltransferase_A"/>
</dbReference>
<dbReference type="InterPro" id="IPR048641">
    <property type="entry name" value="RlmN_N"/>
</dbReference>
<dbReference type="InterPro" id="IPR027492">
    <property type="entry name" value="RNA_MTrfase_RlmN"/>
</dbReference>
<dbReference type="InterPro" id="IPR004383">
    <property type="entry name" value="rRNA_lsu_MTrfase_RlmN/Cfr"/>
</dbReference>
<dbReference type="InterPro" id="IPR007197">
    <property type="entry name" value="rSAM"/>
</dbReference>
<dbReference type="NCBIfam" id="TIGR00048">
    <property type="entry name" value="rRNA_mod_RlmN"/>
    <property type="match status" value="1"/>
</dbReference>
<dbReference type="PANTHER" id="PTHR30544">
    <property type="entry name" value="23S RRNA METHYLTRANSFERASE"/>
    <property type="match status" value="1"/>
</dbReference>
<dbReference type="PANTHER" id="PTHR30544:SF5">
    <property type="entry name" value="RADICAL SAM CORE DOMAIN-CONTAINING PROTEIN"/>
    <property type="match status" value="1"/>
</dbReference>
<dbReference type="Pfam" id="PF04055">
    <property type="entry name" value="Radical_SAM"/>
    <property type="match status" value="1"/>
</dbReference>
<dbReference type="Pfam" id="PF21016">
    <property type="entry name" value="RlmN_N"/>
    <property type="match status" value="1"/>
</dbReference>
<dbReference type="PIRSF" id="PIRSF006004">
    <property type="entry name" value="CHP00048"/>
    <property type="match status" value="1"/>
</dbReference>
<dbReference type="SFLD" id="SFLDF00275">
    <property type="entry name" value="adenosine_C2_methyltransferase"/>
    <property type="match status" value="1"/>
</dbReference>
<dbReference type="SFLD" id="SFLDG01062">
    <property type="entry name" value="methyltransferase_(Class_A)"/>
    <property type="match status" value="1"/>
</dbReference>
<dbReference type="SUPFAM" id="SSF102114">
    <property type="entry name" value="Radical SAM enzymes"/>
    <property type="match status" value="1"/>
</dbReference>
<dbReference type="PROSITE" id="PS51918">
    <property type="entry name" value="RADICAL_SAM"/>
    <property type="match status" value="1"/>
</dbReference>
<reference key="1">
    <citation type="journal article" date="2010" name="Genome Biol. Evol.">
        <title>Continuing evolution of Burkholderia mallei through genome reduction and large-scale rearrangements.</title>
        <authorList>
            <person name="Losada L."/>
            <person name="Ronning C.M."/>
            <person name="DeShazer D."/>
            <person name="Woods D."/>
            <person name="Fedorova N."/>
            <person name="Kim H.S."/>
            <person name="Shabalina S.A."/>
            <person name="Pearson T.R."/>
            <person name="Brinkac L."/>
            <person name="Tan P."/>
            <person name="Nandi T."/>
            <person name="Crabtree J."/>
            <person name="Badger J."/>
            <person name="Beckstrom-Sternberg S."/>
            <person name="Saqib M."/>
            <person name="Schutzer S.E."/>
            <person name="Keim P."/>
            <person name="Nierman W.C."/>
        </authorList>
    </citation>
    <scope>NUCLEOTIDE SEQUENCE [LARGE SCALE GENOMIC DNA]</scope>
    <source>
        <strain>668</strain>
    </source>
</reference>
<gene>
    <name evidence="1" type="primary">rlmN</name>
    <name type="ordered locus">BURPS668_2192</name>
</gene>
<accession>A3NA56</accession>
<protein>
    <recommendedName>
        <fullName evidence="1">Dual-specificity RNA methyltransferase RlmN</fullName>
        <ecNumber evidence="1">2.1.1.192</ecNumber>
    </recommendedName>
    <alternativeName>
        <fullName evidence="1">23S rRNA (adenine(2503)-C(2))-methyltransferase</fullName>
    </alternativeName>
    <alternativeName>
        <fullName evidence="1">23S rRNA m2A2503 methyltransferase</fullName>
    </alternativeName>
    <alternativeName>
        <fullName evidence="1">Ribosomal RNA large subunit methyltransferase N</fullName>
    </alternativeName>
    <alternativeName>
        <fullName evidence="1">tRNA (adenine(37)-C(2))-methyltransferase</fullName>
    </alternativeName>
    <alternativeName>
        <fullName evidence="1">tRNA m2A37 methyltransferase</fullName>
    </alternativeName>
</protein>
<sequence>MAGETIVNLLDLDAEGLVAYCGSLGEKAFRAKQLQRWIHQYNAADFDGMTDLAKSLREKLKGRAVIGTPDILSDHVSADGTRKWLINVGNGNAVETVFIPEETRGTLCVSSQAGCAVNCRFCSTGKQGFSRNLSTGEIVGQLRMAEFALRASLGRAPGPNGKAERVITNVVMMGMGEPLLNYSAVVPAMRLMLDDNAYGLSRRRVTLSTSGVVPMMDRLGAELPVALAVSLHAPNDALRDELVPLNKKHPLRELMAACQRYLKVAPRDFITFEYCMLDGVNDTEAHARELLAVTRDVPCKFNLIPFNPFPESGLVRSKTEQIKRFAQVLIDAGVVTTIRKTRGDDIDAACGQLAGAVKDRTRLAERTGASKIIEVRAV</sequence>
<evidence type="ECO:0000255" key="1">
    <source>
        <dbReference type="HAMAP-Rule" id="MF_01849"/>
    </source>
</evidence>
<evidence type="ECO:0000255" key="2">
    <source>
        <dbReference type="PROSITE-ProRule" id="PRU01266"/>
    </source>
</evidence>
<feature type="chain" id="PRO_0000350084" description="Dual-specificity RNA methyltransferase RlmN">
    <location>
        <begin position="1"/>
        <end position="378"/>
    </location>
</feature>
<feature type="domain" description="Radical SAM core" evidence="2">
    <location>
        <begin position="101"/>
        <end position="345"/>
    </location>
</feature>
<feature type="active site" description="Proton acceptor" evidence="1">
    <location>
        <position position="95"/>
    </location>
</feature>
<feature type="active site" description="S-methylcysteine intermediate" evidence="1">
    <location>
        <position position="350"/>
    </location>
</feature>
<feature type="binding site" evidence="1">
    <location>
        <position position="115"/>
    </location>
    <ligand>
        <name>[4Fe-4S] cluster</name>
        <dbReference type="ChEBI" id="CHEBI:49883"/>
        <note>4Fe-4S-S-AdoMet</note>
    </ligand>
</feature>
<feature type="binding site" evidence="1">
    <location>
        <position position="119"/>
    </location>
    <ligand>
        <name>[4Fe-4S] cluster</name>
        <dbReference type="ChEBI" id="CHEBI:49883"/>
        <note>4Fe-4S-S-AdoMet</note>
    </ligand>
</feature>
<feature type="binding site" evidence="1">
    <location>
        <position position="122"/>
    </location>
    <ligand>
        <name>[4Fe-4S] cluster</name>
        <dbReference type="ChEBI" id="CHEBI:49883"/>
        <note>4Fe-4S-S-AdoMet</note>
    </ligand>
</feature>
<feature type="binding site" evidence="1">
    <location>
        <begin position="176"/>
        <end position="177"/>
    </location>
    <ligand>
        <name>S-adenosyl-L-methionine</name>
        <dbReference type="ChEBI" id="CHEBI:59789"/>
    </ligand>
</feature>
<feature type="binding site" evidence="1">
    <location>
        <position position="208"/>
    </location>
    <ligand>
        <name>S-adenosyl-L-methionine</name>
        <dbReference type="ChEBI" id="CHEBI:59789"/>
    </ligand>
</feature>
<feature type="binding site" evidence="1">
    <location>
        <begin position="230"/>
        <end position="232"/>
    </location>
    <ligand>
        <name>S-adenosyl-L-methionine</name>
        <dbReference type="ChEBI" id="CHEBI:59789"/>
    </ligand>
</feature>
<feature type="binding site" evidence="1">
    <location>
        <position position="307"/>
    </location>
    <ligand>
        <name>S-adenosyl-L-methionine</name>
        <dbReference type="ChEBI" id="CHEBI:59789"/>
    </ligand>
</feature>
<feature type="disulfide bond" description="(transient)" evidence="1">
    <location>
        <begin position="108"/>
        <end position="350"/>
    </location>
</feature>